<gene>
    <name evidence="1" type="primary">mptA</name>
    <name type="ordered locus">Mboo_0480</name>
</gene>
<proteinExistence type="inferred from homology"/>
<protein>
    <recommendedName>
        <fullName evidence="1">GTP cyclohydrolase MptA</fullName>
        <ecNumber evidence="1">3.5.4.39</ecNumber>
    </recommendedName>
    <alternativeName>
        <fullName evidence="1">GTP cyclohydrolase IV</fullName>
    </alternativeName>
</protein>
<name>MPTA_METB6</name>
<evidence type="ECO:0000255" key="1">
    <source>
        <dbReference type="HAMAP-Rule" id="MF_01527"/>
    </source>
</evidence>
<reference key="1">
    <citation type="journal article" date="2015" name="Microbiology">
        <title>Genome of Methanoregula boonei 6A8 reveals adaptations to oligotrophic peatland environments.</title>
        <authorList>
            <person name="Braeuer S."/>
            <person name="Cadillo-Quiroz H."/>
            <person name="Kyrpides N."/>
            <person name="Woyke T."/>
            <person name="Goodwin L."/>
            <person name="Detter C."/>
            <person name="Podell S."/>
            <person name="Yavitt J.B."/>
            <person name="Zinder S.H."/>
        </authorList>
    </citation>
    <scope>NUCLEOTIDE SEQUENCE [LARGE SCALE GENOMIC DNA]</scope>
    <source>
        <strain>DSM 21154 / JCM 14090 / 6A8</strain>
    </source>
</reference>
<keyword id="KW-0378">Hydrolase</keyword>
<keyword id="KW-0408">Iron</keyword>
<keyword id="KW-0479">Metal-binding</keyword>
<keyword id="KW-1185">Reference proteome</keyword>
<sequence length="326" mass="36559">MDKAPEQPFSGKLPDVQATSPDVRINLTRVGVKNVKKLVEVTRPDKRPVVFISNFDVYVDLPGSLKGANLSRNFEVIDEVLQQAIDGEVNEIENLCSAVARKLLDRHEYADRTEVLMRSEFMVKRETPVSHTTCHEVVKVHARAIAKRTFRDPIVRKSIGAEVTGMTACPCAQNIMKERANHVLEGLGIDQKTIDAFFAEVPMATHNQRGRGFLCIETDDDQHVDLEKIIRILKESMSAGIYELLKRGDESAVVLAAHKNPRFVEDCVREMAKKVLSGFDYLPGDAVVTIKQTNEESIHQHDAYAERRATLAELQDELNGDHKTSC</sequence>
<feature type="chain" id="PRO_0000316535" description="GTP cyclohydrolase MptA">
    <location>
        <begin position="1"/>
        <end position="326"/>
    </location>
</feature>
<feature type="site" description="May be catalytically important" evidence="1">
    <location>
        <position position="169"/>
    </location>
</feature>
<accession>A7I5I7</accession>
<organism>
    <name type="scientific">Methanoregula boonei (strain DSM 21154 / JCM 14090 / 6A8)</name>
    <dbReference type="NCBI Taxonomy" id="456442"/>
    <lineage>
        <taxon>Archaea</taxon>
        <taxon>Methanobacteriati</taxon>
        <taxon>Methanobacteriota</taxon>
        <taxon>Stenosarchaea group</taxon>
        <taxon>Methanomicrobia</taxon>
        <taxon>Methanomicrobiales</taxon>
        <taxon>Methanoregulaceae</taxon>
        <taxon>Methanoregula</taxon>
    </lineage>
</organism>
<comment type="function">
    <text evidence="1">Converts GTP to 7,8-dihydro-D-neopterin 2',3'-cyclic phosphate, the first intermediate in the biosynthesis of coenzyme methanopterin.</text>
</comment>
<comment type="catalytic activity">
    <reaction evidence="1">
        <text>GTP + H2O = 7,8-dihydroneopterin 2',3'-cyclic phosphate + formate + diphosphate + H(+)</text>
        <dbReference type="Rhea" id="RHEA:25860"/>
        <dbReference type="ChEBI" id="CHEBI:15377"/>
        <dbReference type="ChEBI" id="CHEBI:15378"/>
        <dbReference type="ChEBI" id="CHEBI:15740"/>
        <dbReference type="ChEBI" id="CHEBI:33019"/>
        <dbReference type="ChEBI" id="CHEBI:37565"/>
        <dbReference type="ChEBI" id="CHEBI:58854"/>
        <dbReference type="EC" id="3.5.4.39"/>
    </reaction>
</comment>
<comment type="cofactor">
    <cofactor evidence="1">
        <name>Fe(2+)</name>
        <dbReference type="ChEBI" id="CHEBI:29033"/>
    </cofactor>
    <text evidence="1">Binds 1 Fe(2+) ion per subunit.</text>
</comment>
<comment type="pathway">
    <text evidence="1">Cofactor biosynthesis; 5,6,7,8-tetrahydromethanopterin biosynthesis.</text>
</comment>
<comment type="subunit">
    <text evidence="1">Homodimer.</text>
</comment>
<comment type="similarity">
    <text evidence="1">Belongs to the GTP cyclohydrolase IV family.</text>
</comment>
<dbReference type="EC" id="3.5.4.39" evidence="1"/>
<dbReference type="EMBL" id="CP000780">
    <property type="protein sequence ID" value="ABS54998.1"/>
    <property type="molecule type" value="Genomic_DNA"/>
</dbReference>
<dbReference type="RefSeq" id="WP_012106017.1">
    <property type="nucleotide sequence ID" value="NC_009712.1"/>
</dbReference>
<dbReference type="SMR" id="A7I5I7"/>
<dbReference type="STRING" id="456442.Mboo_0480"/>
<dbReference type="GeneID" id="5410165"/>
<dbReference type="KEGG" id="mbn:Mboo_0480"/>
<dbReference type="eggNOG" id="arCOG04301">
    <property type="taxonomic scope" value="Archaea"/>
</dbReference>
<dbReference type="HOGENOM" id="CLU_062816_1_0_2"/>
<dbReference type="OrthoDB" id="53087at2157"/>
<dbReference type="UniPathway" id="UPA00065"/>
<dbReference type="Proteomes" id="UP000002408">
    <property type="component" value="Chromosome"/>
</dbReference>
<dbReference type="GO" id="GO:0003934">
    <property type="term" value="F:GTP cyclohydrolase I activity"/>
    <property type="evidence" value="ECO:0007669"/>
    <property type="project" value="InterPro"/>
</dbReference>
<dbReference type="GO" id="GO:0044682">
    <property type="term" value="F:GTP cyclohydrolase IV activity"/>
    <property type="evidence" value="ECO:0007669"/>
    <property type="project" value="UniProtKB-UniRule"/>
</dbReference>
<dbReference type="GO" id="GO:0005506">
    <property type="term" value="F:iron ion binding"/>
    <property type="evidence" value="ECO:0007669"/>
    <property type="project" value="UniProtKB-UniRule"/>
</dbReference>
<dbReference type="GO" id="GO:2001118">
    <property type="term" value="P:tetrahydromethanopterin biosynthetic process"/>
    <property type="evidence" value="ECO:0007669"/>
    <property type="project" value="UniProtKB-UniRule"/>
</dbReference>
<dbReference type="Gene3D" id="3.10.270.10">
    <property type="entry name" value="Urate Oxidase"/>
    <property type="match status" value="1"/>
</dbReference>
<dbReference type="HAMAP" id="MF_01527_A">
    <property type="entry name" value="GTP_cyclohydrol_A"/>
    <property type="match status" value="1"/>
</dbReference>
<dbReference type="InterPro" id="IPR003801">
    <property type="entry name" value="GTP_cyclohydrolase_FolE2/MptA"/>
</dbReference>
<dbReference type="InterPro" id="IPR022840">
    <property type="entry name" value="GTP_cyclohydrolase_MptA"/>
</dbReference>
<dbReference type="NCBIfam" id="TIGR00294">
    <property type="entry name" value="GTP cyclohydrolase MptA"/>
    <property type="match status" value="1"/>
</dbReference>
<dbReference type="PANTHER" id="PTHR36445">
    <property type="entry name" value="GTP CYCLOHYDROLASE MPTA"/>
    <property type="match status" value="1"/>
</dbReference>
<dbReference type="PANTHER" id="PTHR36445:SF1">
    <property type="entry name" value="GTP CYCLOHYDROLASE MPTA"/>
    <property type="match status" value="1"/>
</dbReference>
<dbReference type="Pfam" id="PF02649">
    <property type="entry name" value="GCHY-1"/>
    <property type="match status" value="1"/>
</dbReference>